<protein>
    <recommendedName>
        <fullName evidence="6">Delta-aiptatoxin-Adi1a</fullName>
        <shortName evidence="6">Delta-ATTX-Adi1a</shortName>
    </recommendedName>
    <alternativeName>
        <fullName evidence="5">Ion channel modifier Ade-1</fullName>
        <shortName evidence="7">Ade1</shortName>
    </alternativeName>
</protein>
<evidence type="ECO:0000250" key="1">
    <source>
        <dbReference type="UniProtKB" id="P01528"/>
    </source>
</evidence>
<evidence type="ECO:0000255" key="2"/>
<evidence type="ECO:0000269" key="3">
    <source>
    </source>
</evidence>
<evidence type="ECO:0000269" key="4">
    <source>
    </source>
</evidence>
<evidence type="ECO:0000303" key="5">
    <source>
    </source>
</evidence>
<evidence type="ECO:0000305" key="6"/>
<evidence type="ECO:0000312" key="7">
    <source>
        <dbReference type="EMBL" id="ACQ83467.1"/>
    </source>
</evidence>
<reference key="1">
    <citation type="journal article" date="2013" name="Biochem. J.">
        <title>AdE-1, a new inotropic Na(+) channel toxin from Aiptasia diaphana, is similar to, yet distinct from, known anemone Na(+) channel toxins.</title>
        <authorList>
            <person name="Nesher N."/>
            <person name="Shapira E."/>
            <person name="Sher D."/>
            <person name="Moran Y."/>
            <person name="Tsveyer L."/>
            <person name="Turchetti-Maia A.L."/>
            <person name="Horowitz M."/>
            <person name="Hochner B."/>
            <person name="Zlotkin E."/>
        </authorList>
    </citation>
    <scope>NUCLEOTIDE SEQUENCE [MRNA]</scope>
    <scope>PROTEIN SEQUENCE OF 47-76</scope>
    <scope>FUNCTION</scope>
    <scope>TOXIC DOSE</scope>
    <scope>SUBCELLULAR LOCATION</scope>
    <scope>MASS SPECTROMETRY</scope>
    <scope>3D-STRUCTURE MODELING</scope>
</reference>
<reference key="2">
    <citation type="journal article" date="2014" name="Biochem. J.">
        <title>The sea anemone toxin AdE-1 modifies both sodium and potassium currents of rat cardiomyocytes.</title>
        <authorList>
            <person name="Nesher N."/>
            <person name="Zlotkin E."/>
            <person name="Hochner B."/>
        </authorList>
    </citation>
    <scope>FUNCTION</scope>
</reference>
<feature type="signal peptide" evidence="2">
    <location>
        <begin position="1"/>
        <end position="21"/>
    </location>
</feature>
<feature type="propeptide" id="PRO_0000434449" evidence="3">
    <location>
        <begin position="22"/>
        <end position="44"/>
    </location>
</feature>
<feature type="chain" id="PRO_0000434450" description="Delta-aiptatoxin-Adi1a">
    <location>
        <begin position="47"/>
        <end position="90"/>
    </location>
</feature>
<feature type="disulfide bond" evidence="1">
    <location>
        <begin position="50"/>
        <end position="86"/>
    </location>
</feature>
<feature type="disulfide bond" evidence="1">
    <location>
        <begin position="52"/>
        <end position="77"/>
    </location>
</feature>
<feature type="disulfide bond" evidence="1">
    <location>
        <begin position="70"/>
        <end position="87"/>
    </location>
</feature>
<dbReference type="EMBL" id="FJ418889">
    <property type="protein sequence ID" value="ACQ83467.1"/>
    <property type="molecule type" value="mRNA"/>
</dbReference>
<dbReference type="Proteomes" id="UP000887567">
    <property type="component" value="Unplaced"/>
</dbReference>
<dbReference type="GO" id="GO:0005576">
    <property type="term" value="C:extracellular region"/>
    <property type="evidence" value="ECO:0007669"/>
    <property type="project" value="UniProtKB-SubCell"/>
</dbReference>
<dbReference type="GO" id="GO:0042151">
    <property type="term" value="C:nematocyst"/>
    <property type="evidence" value="ECO:0007669"/>
    <property type="project" value="UniProtKB-SubCell"/>
</dbReference>
<dbReference type="GO" id="GO:0015459">
    <property type="term" value="F:potassium channel regulator activity"/>
    <property type="evidence" value="ECO:0007669"/>
    <property type="project" value="UniProtKB-KW"/>
</dbReference>
<dbReference type="GO" id="GO:0017080">
    <property type="term" value="F:sodium channel regulator activity"/>
    <property type="evidence" value="ECO:0007669"/>
    <property type="project" value="UniProtKB-KW"/>
</dbReference>
<dbReference type="GO" id="GO:0090729">
    <property type="term" value="F:toxin activity"/>
    <property type="evidence" value="ECO:0007669"/>
    <property type="project" value="UniProtKB-KW"/>
</dbReference>
<dbReference type="Gene3D" id="2.20.20.10">
    <property type="entry name" value="Anthopleurin-A"/>
    <property type="match status" value="1"/>
</dbReference>
<dbReference type="InterPro" id="IPR023355">
    <property type="entry name" value="Myo_ane_neurotoxin_sf"/>
</dbReference>
<dbReference type="SUPFAM" id="SSF57392">
    <property type="entry name" value="Defensin-like"/>
    <property type="match status" value="1"/>
</dbReference>
<comment type="function">
    <text evidence="3 4">Cardioactive peptide that acts on voltage-gated sodium channels (hNav1.5/SCN5A) and voltage-gated potassium channels (Kv) (PubMed:23356888, PubMed:24749540). The activity on sodium channels consists of inhibition on sodium current inactivation with no significant effect on current activation. This effect may be caused by direct interaction of the toxin with sodium channel site-3 (PubMed:23356888, PubMed:24749540). The activity on potassium channels consists of a significant increase of the amplitude of the transient component of the potassium current, shifting the current threshold to more negative membrane potentials. These effects are concentration-dependent and reversible and may be due to a direct interaction between the toxin and the voltage-sensing domain of the channel (PubMed:24749540). Physiologically, this toxin increases the amplitude of cardiomyocyte contraction and slows the late phase of the twitch relaxation velocity with no induction of spontaneous twitching. It increases action potential duration of cardiomyocytes with no effect on its threshold and on the cell resting potential. On insects, it shows neurotoxic activity to the blowfly larvae S.falculaty, causing an immediate spasm that progressed to body contraction and paralysis.</text>
</comment>
<comment type="subcellular location">
    <subcellularLocation>
        <location>Secreted</location>
    </subcellularLocation>
    <subcellularLocation>
        <location evidence="3">Nematocyst</location>
    </subcellularLocation>
</comment>
<comment type="mass spectrometry" mass="4907.0" method="MALDI" evidence="3"/>
<comment type="toxic dose">
    <text evidence="3">PD(50) is 16.91 +-5.78 ug/kg into blowfly larvae (S.falculata).</text>
</comment>
<comment type="miscellaneous">
    <text evidence="3">Negative results: has no hemolytic activity on human erythrocytes. Has no effect on the shape, color and configuration of cardiomyocytes (PubMed:23356888). Does not show significant effect on the calcium currents (PubMed:24749540).</text>
</comment>
<comment type="similarity">
    <text evidence="6">Belongs to the sea anemone sodium channel inhibitory toxin family.</text>
</comment>
<name>NAU1A_EXADI</name>
<accession>E3P6S4</accession>
<sequence length="90" mass="9929">MKTAMLIAVLGFCAALCFVESSHEEEREAAVYLTDLVSKAESAIKRGIPCRCDKNSDELNGEQSYMNGNCGDGWKKCRSVNAIFNCCQRV</sequence>
<proteinExistence type="evidence at protein level"/>
<keyword id="KW-0165">Cleavage on pair of basic residues</keyword>
<keyword id="KW-0903">Direct protein sequencing</keyword>
<keyword id="KW-1015">Disulfide bond</keyword>
<keyword id="KW-0872">Ion channel impairing toxin</keyword>
<keyword id="KW-0959">Myotoxin</keyword>
<keyword id="KW-0166">Nematocyst</keyword>
<keyword id="KW-0528">Neurotoxin</keyword>
<keyword id="KW-0632">Potassium channel impairing toxin</keyword>
<keyword id="KW-1185">Reference proteome</keyword>
<keyword id="KW-0964">Secreted</keyword>
<keyword id="KW-0732">Signal</keyword>
<keyword id="KW-0800">Toxin</keyword>
<keyword id="KW-1220">Voltage-gated potassium channel impairing toxin</keyword>
<keyword id="KW-0738">Voltage-gated sodium channel impairing toxin</keyword>
<organism>
    <name type="scientific">Exaiptasia diaphana</name>
    <name type="common">Tropical sea anemone</name>
    <name type="synonym">Aiptasia pulchella</name>
    <dbReference type="NCBI Taxonomy" id="2652724"/>
    <lineage>
        <taxon>Eukaryota</taxon>
        <taxon>Metazoa</taxon>
        <taxon>Cnidaria</taxon>
        <taxon>Anthozoa</taxon>
        <taxon>Hexacorallia</taxon>
        <taxon>Actiniaria</taxon>
        <taxon>Aiptasiidae</taxon>
        <taxon>Exaiptasia</taxon>
    </lineage>
</organism>